<dbReference type="EC" id="1.2.1.71" evidence="1"/>
<dbReference type="EMBL" id="CP000462">
    <property type="protein sequence ID" value="ABK37081.1"/>
    <property type="molecule type" value="Genomic_DNA"/>
</dbReference>
<dbReference type="RefSeq" id="WP_011706955.1">
    <property type="nucleotide sequence ID" value="NC_008570.1"/>
</dbReference>
<dbReference type="RefSeq" id="YP_857669.1">
    <property type="nucleotide sequence ID" value="NC_008570.1"/>
</dbReference>
<dbReference type="SMR" id="A0KN18"/>
<dbReference type="STRING" id="380703.AHA_3178"/>
<dbReference type="EnsemblBacteria" id="ABK37081">
    <property type="protein sequence ID" value="ABK37081"/>
    <property type="gene ID" value="AHA_3178"/>
</dbReference>
<dbReference type="GeneID" id="4489334"/>
<dbReference type="KEGG" id="aha:AHA_3178"/>
<dbReference type="PATRIC" id="fig|380703.7.peg.3172"/>
<dbReference type="eggNOG" id="COG1012">
    <property type="taxonomic scope" value="Bacteria"/>
</dbReference>
<dbReference type="HOGENOM" id="CLU_005391_1_0_6"/>
<dbReference type="OrthoDB" id="9812625at2"/>
<dbReference type="UniPathway" id="UPA00185">
    <property type="reaction ID" value="UER00282"/>
</dbReference>
<dbReference type="Proteomes" id="UP000000756">
    <property type="component" value="Chromosome"/>
</dbReference>
<dbReference type="GO" id="GO:0043824">
    <property type="term" value="F:succinylglutamate-semialdehyde dehydrogenase activity"/>
    <property type="evidence" value="ECO:0007669"/>
    <property type="project" value="UniProtKB-EC"/>
</dbReference>
<dbReference type="GO" id="GO:0019544">
    <property type="term" value="P:arginine catabolic process to glutamate"/>
    <property type="evidence" value="ECO:0007669"/>
    <property type="project" value="UniProtKB-UniRule"/>
</dbReference>
<dbReference type="GO" id="GO:0019545">
    <property type="term" value="P:arginine catabolic process to succinate"/>
    <property type="evidence" value="ECO:0007669"/>
    <property type="project" value="UniProtKB-UniRule"/>
</dbReference>
<dbReference type="CDD" id="cd07095">
    <property type="entry name" value="ALDH_SGSD_AstD"/>
    <property type="match status" value="1"/>
</dbReference>
<dbReference type="FunFam" id="3.40.605.10:FF:000010">
    <property type="entry name" value="N-succinylglutamate 5-semialdehyde dehydrogenase"/>
    <property type="match status" value="1"/>
</dbReference>
<dbReference type="Gene3D" id="3.40.605.10">
    <property type="entry name" value="Aldehyde Dehydrogenase, Chain A, domain 1"/>
    <property type="match status" value="1"/>
</dbReference>
<dbReference type="Gene3D" id="3.40.309.10">
    <property type="entry name" value="Aldehyde Dehydrogenase, Chain A, domain 2"/>
    <property type="match status" value="1"/>
</dbReference>
<dbReference type="HAMAP" id="MF_01174">
    <property type="entry name" value="Aldedh_AstD"/>
    <property type="match status" value="1"/>
</dbReference>
<dbReference type="InterPro" id="IPR016161">
    <property type="entry name" value="Ald_DH/histidinol_DH"/>
</dbReference>
<dbReference type="InterPro" id="IPR016163">
    <property type="entry name" value="Ald_DH_C"/>
</dbReference>
<dbReference type="InterPro" id="IPR016160">
    <property type="entry name" value="Ald_DH_CS_CYS"/>
</dbReference>
<dbReference type="InterPro" id="IPR029510">
    <property type="entry name" value="Ald_DH_CS_GLU"/>
</dbReference>
<dbReference type="InterPro" id="IPR016162">
    <property type="entry name" value="Ald_DH_N"/>
</dbReference>
<dbReference type="InterPro" id="IPR015590">
    <property type="entry name" value="Aldehyde_DH_dom"/>
</dbReference>
<dbReference type="InterPro" id="IPR017649">
    <property type="entry name" value="SuccinylGlu_semiald_DH_AstD"/>
</dbReference>
<dbReference type="NCBIfam" id="TIGR03240">
    <property type="entry name" value="arg_catab_astD"/>
    <property type="match status" value="1"/>
</dbReference>
<dbReference type="NCBIfam" id="NF006992">
    <property type="entry name" value="PRK09457.1"/>
    <property type="match status" value="1"/>
</dbReference>
<dbReference type="PANTHER" id="PTHR11699">
    <property type="entry name" value="ALDEHYDE DEHYDROGENASE-RELATED"/>
    <property type="match status" value="1"/>
</dbReference>
<dbReference type="Pfam" id="PF00171">
    <property type="entry name" value="Aldedh"/>
    <property type="match status" value="1"/>
</dbReference>
<dbReference type="SUPFAM" id="SSF53720">
    <property type="entry name" value="ALDH-like"/>
    <property type="match status" value="1"/>
</dbReference>
<dbReference type="PROSITE" id="PS00070">
    <property type="entry name" value="ALDEHYDE_DEHYDR_CYS"/>
    <property type="match status" value="1"/>
</dbReference>
<dbReference type="PROSITE" id="PS00687">
    <property type="entry name" value="ALDEHYDE_DEHYDR_GLU"/>
    <property type="match status" value="1"/>
</dbReference>
<sequence>MSQLVQFIDGQWLAGAGKPFESKDPAKNQVIWQGEAASAAQVEAAVKAARHAFYHWSDLALDYRLAIVRRYADLLGEHKEALALTIARETGKPLWETRTEVAAMQGKIAISIRAHDERTGTVENPMPGAKAFVRHKPHGVVAVFGPYNFPGHLPNGHIVPALIAGNTVVFKPSELTPMVAEAMLKIWQEAGLPKGVLNLVQGEVDTGKALAGNPDIDGLFFTGSSRTGHFLHQQFAGQPGKILALEMGGNNPLIVKDVSDIDGAVHAIVQSAFITSGQRCTCSRRLFVERSVQGDALVKRLVEVVGQIKVGLYDAAEQPFMGAMISEKAALGMVEAQANLQRLGGESLLTLTHLEAGTGFVSPGIIDVTAVSALPDEEYFGPLLQLIRYDDFDAAIDQGNATSFGLSAGLLGDSEADWQHFFKRIRAGIVNWNKPITGASSAAPFGGIGASGNHRASAYYAADYCAYPVASVEDSKAAMPDQLSPGLTF</sequence>
<evidence type="ECO:0000255" key="1">
    <source>
        <dbReference type="HAMAP-Rule" id="MF_01174"/>
    </source>
</evidence>
<proteinExistence type="inferred from homology"/>
<gene>
    <name evidence="1" type="primary">astD</name>
    <name type="ordered locus">AHA_3178</name>
</gene>
<keyword id="KW-0056">Arginine metabolism</keyword>
<keyword id="KW-0520">NAD</keyword>
<keyword id="KW-0560">Oxidoreductase</keyword>
<keyword id="KW-1185">Reference proteome</keyword>
<protein>
    <recommendedName>
        <fullName evidence="1">N-succinylglutamate 5-semialdehyde dehydrogenase</fullName>
        <ecNumber evidence="1">1.2.1.71</ecNumber>
    </recommendedName>
    <alternativeName>
        <fullName evidence="1">Succinylglutamic semialdehyde dehydrogenase</fullName>
        <shortName evidence="1">SGSD</shortName>
    </alternativeName>
</protein>
<accession>A0KN18</accession>
<name>ASTD_AERHH</name>
<organism>
    <name type="scientific">Aeromonas hydrophila subsp. hydrophila (strain ATCC 7966 / DSM 30187 / BCRC 13018 / CCUG 14551 / JCM 1027 / KCTC 2358 / NCIMB 9240 / NCTC 8049)</name>
    <dbReference type="NCBI Taxonomy" id="380703"/>
    <lineage>
        <taxon>Bacteria</taxon>
        <taxon>Pseudomonadati</taxon>
        <taxon>Pseudomonadota</taxon>
        <taxon>Gammaproteobacteria</taxon>
        <taxon>Aeromonadales</taxon>
        <taxon>Aeromonadaceae</taxon>
        <taxon>Aeromonas</taxon>
    </lineage>
</organism>
<feature type="chain" id="PRO_1000065745" description="N-succinylglutamate 5-semialdehyde dehydrogenase">
    <location>
        <begin position="1"/>
        <end position="489"/>
    </location>
</feature>
<feature type="active site" evidence="1">
    <location>
        <position position="246"/>
    </location>
</feature>
<feature type="active site" evidence="1">
    <location>
        <position position="280"/>
    </location>
</feature>
<feature type="binding site" evidence="1">
    <location>
        <begin position="223"/>
        <end position="228"/>
    </location>
    <ligand>
        <name>NAD(+)</name>
        <dbReference type="ChEBI" id="CHEBI:57540"/>
    </ligand>
</feature>
<reference key="1">
    <citation type="journal article" date="2006" name="J. Bacteriol.">
        <title>Genome sequence of Aeromonas hydrophila ATCC 7966T: jack of all trades.</title>
        <authorList>
            <person name="Seshadri R."/>
            <person name="Joseph S.W."/>
            <person name="Chopra A.K."/>
            <person name="Sha J."/>
            <person name="Shaw J."/>
            <person name="Graf J."/>
            <person name="Haft D.H."/>
            <person name="Wu M."/>
            <person name="Ren Q."/>
            <person name="Rosovitz M.J."/>
            <person name="Madupu R."/>
            <person name="Tallon L."/>
            <person name="Kim M."/>
            <person name="Jin S."/>
            <person name="Vuong H."/>
            <person name="Stine O.C."/>
            <person name="Ali A."/>
            <person name="Horneman A.J."/>
            <person name="Heidelberg J.F."/>
        </authorList>
    </citation>
    <scope>NUCLEOTIDE SEQUENCE [LARGE SCALE GENOMIC DNA]</scope>
    <source>
        <strain>ATCC 7966 / DSM 30187 / BCRC 13018 / CCUG 14551 / JCM 1027 / KCTC 2358 / NCIMB 9240 / NCTC 8049</strain>
    </source>
</reference>
<comment type="function">
    <text evidence="1">Catalyzes the NAD-dependent reduction of succinylglutamate semialdehyde into succinylglutamate.</text>
</comment>
<comment type="catalytic activity">
    <reaction evidence="1">
        <text>N-succinyl-L-glutamate 5-semialdehyde + NAD(+) + H2O = N-succinyl-L-glutamate + NADH + 2 H(+)</text>
        <dbReference type="Rhea" id="RHEA:10812"/>
        <dbReference type="ChEBI" id="CHEBI:15377"/>
        <dbReference type="ChEBI" id="CHEBI:15378"/>
        <dbReference type="ChEBI" id="CHEBI:57540"/>
        <dbReference type="ChEBI" id="CHEBI:57945"/>
        <dbReference type="ChEBI" id="CHEBI:58520"/>
        <dbReference type="ChEBI" id="CHEBI:58763"/>
        <dbReference type="EC" id="1.2.1.71"/>
    </reaction>
</comment>
<comment type="pathway">
    <text evidence="1">Amino-acid degradation; L-arginine degradation via AST pathway; L-glutamate and succinate from L-arginine: step 4/5.</text>
</comment>
<comment type="similarity">
    <text evidence="1">Belongs to the aldehyde dehydrogenase family. AstD subfamily.</text>
</comment>